<accession>B1P1G5</accession>
<name>JZT40_CHIGU</name>
<comment type="function">
    <text>Probable ion channel inhibitor.</text>
</comment>
<comment type="subcellular location">
    <subcellularLocation>
        <location evidence="1">Secreted</location>
    </subcellularLocation>
</comment>
<comment type="tissue specificity">
    <text>Expressed by the venom gland.</text>
</comment>
<comment type="domain">
    <text evidence="2">The presence of a 'disulfide through disulfide knot' structurally defines this protein as a knottin.</text>
</comment>
<comment type="similarity">
    <text evidence="4">Belongs to the neurotoxin 10 (Hwtx-1) family. 05 (F4a) subfamily.</text>
</comment>
<dbReference type="EMBL" id="EU233896">
    <property type="protein sequence ID" value="ABY71715.1"/>
    <property type="molecule type" value="mRNA"/>
</dbReference>
<dbReference type="SMR" id="B1P1G5"/>
<dbReference type="ArachnoServer" id="AS000844">
    <property type="toxin name" value="U21-theraphotoxin-Cg1c"/>
</dbReference>
<dbReference type="GO" id="GO:0005576">
    <property type="term" value="C:extracellular region"/>
    <property type="evidence" value="ECO:0007669"/>
    <property type="project" value="UniProtKB-SubCell"/>
</dbReference>
<dbReference type="GO" id="GO:0008200">
    <property type="term" value="F:ion channel inhibitor activity"/>
    <property type="evidence" value="ECO:0007669"/>
    <property type="project" value="InterPro"/>
</dbReference>
<dbReference type="GO" id="GO:0090729">
    <property type="term" value="F:toxin activity"/>
    <property type="evidence" value="ECO:0007669"/>
    <property type="project" value="UniProtKB-KW"/>
</dbReference>
<dbReference type="InterPro" id="IPR011696">
    <property type="entry name" value="Huwentoxin-1"/>
</dbReference>
<dbReference type="Pfam" id="PF07740">
    <property type="entry name" value="Toxin_12"/>
    <property type="match status" value="1"/>
</dbReference>
<dbReference type="SUPFAM" id="SSF57059">
    <property type="entry name" value="omega toxin-like"/>
    <property type="match status" value="1"/>
</dbReference>
<keyword id="KW-1015">Disulfide bond</keyword>
<keyword id="KW-0872">Ion channel impairing toxin</keyword>
<keyword id="KW-0960">Knottin</keyword>
<keyword id="KW-0964">Secreted</keyword>
<keyword id="KW-0732">Signal</keyword>
<keyword id="KW-0800">Toxin</keyword>
<feature type="signal peptide" evidence="3">
    <location>
        <begin position="1"/>
        <end position="21"/>
    </location>
</feature>
<feature type="propeptide" id="PRO_0000398490" evidence="1">
    <location>
        <begin position="22"/>
        <end position="47"/>
    </location>
</feature>
<feature type="peptide" id="PRO_0000398491" description="U21-theraphotoxin-Cg1c">
    <location>
        <begin position="48"/>
        <end position="84"/>
    </location>
</feature>
<feature type="disulfide bond" evidence="2">
    <location>
        <begin position="49"/>
        <end position="63"/>
    </location>
</feature>
<feature type="disulfide bond" evidence="2">
    <location>
        <begin position="56"/>
        <end position="68"/>
    </location>
</feature>
<feature type="disulfide bond" evidence="2">
    <location>
        <begin position="62"/>
        <end position="76"/>
    </location>
</feature>
<sequence>MKVSVLITLAVLGVMFLLTSAEERGSDQMDSPAWLKSMERIFQSEERECRWLFGGCEKDSDCCEHLGCRRTKPSWCGWDFTFGK</sequence>
<proteinExistence type="evidence at transcript level"/>
<reference key="1">
    <citation type="journal article" date="2008" name="Cell. Mol. Life Sci.">
        <title>Molecular diversity and evolution of cystine knot toxins of the tarantula Chilobrachys jingzhao.</title>
        <authorList>
            <person name="Chen J."/>
            <person name="Deng M."/>
            <person name="He Q."/>
            <person name="Meng E."/>
            <person name="Jiang L."/>
            <person name="Liao Z."/>
            <person name="Rong M."/>
            <person name="Liang S."/>
        </authorList>
    </citation>
    <scope>NUCLEOTIDE SEQUENCE [LARGE SCALE MRNA]</scope>
    <source>
        <tissue>Venom gland</tissue>
    </source>
</reference>
<organism>
    <name type="scientific">Chilobrachys guangxiensis</name>
    <name type="common">Chinese earth tiger tarantula</name>
    <name type="synonym">Chilobrachys jingzhao</name>
    <dbReference type="NCBI Taxonomy" id="278060"/>
    <lineage>
        <taxon>Eukaryota</taxon>
        <taxon>Metazoa</taxon>
        <taxon>Ecdysozoa</taxon>
        <taxon>Arthropoda</taxon>
        <taxon>Chelicerata</taxon>
        <taxon>Arachnida</taxon>
        <taxon>Araneae</taxon>
        <taxon>Mygalomorphae</taxon>
        <taxon>Theraphosidae</taxon>
        <taxon>Chilobrachys</taxon>
    </lineage>
</organism>
<protein>
    <recommendedName>
        <fullName>U21-theraphotoxin-Cg1c</fullName>
        <shortName>U21-TRTX-Cg1c</shortName>
    </recommendedName>
    <alternativeName>
        <fullName>Jingzhaotoxin-40</fullName>
        <shortName>JZTX-40</shortName>
    </alternativeName>
</protein>
<evidence type="ECO:0000250" key="1"/>
<evidence type="ECO:0000250" key="2">
    <source>
        <dbReference type="UniProtKB" id="P0C247"/>
    </source>
</evidence>
<evidence type="ECO:0000255" key="3"/>
<evidence type="ECO:0000305" key="4"/>